<dbReference type="EMBL" id="V01087">
    <property type="protein sequence ID" value="CAA24271.1"/>
    <property type="molecule type" value="Unassigned_RNA"/>
</dbReference>
<dbReference type="PDB" id="1IBN">
    <property type="method" value="NMR"/>
    <property type="chains" value="A=346-365"/>
</dbReference>
<dbReference type="PDB" id="1IBO">
    <property type="method" value="NMR"/>
    <property type="chains" value="A=346-365"/>
</dbReference>
<dbReference type="PDB" id="1MQL">
    <property type="method" value="X-ray"/>
    <property type="resolution" value="2.90 A"/>
    <property type="chains" value="A/D/G=17-345, B/E/H=346-566"/>
</dbReference>
<dbReference type="PDB" id="1MQM">
    <property type="method" value="X-ray"/>
    <property type="resolution" value="2.60 A"/>
    <property type="chains" value="A/D/G=17-345, B/E/H=346-566"/>
</dbReference>
<dbReference type="PDB" id="1MQN">
    <property type="method" value="X-ray"/>
    <property type="resolution" value="3.20 A"/>
    <property type="chains" value="A/D/G=17-345, B/E/H=346-566"/>
</dbReference>
<dbReference type="PDBsum" id="1IBN"/>
<dbReference type="PDBsum" id="1IBO"/>
<dbReference type="PDBsum" id="1MQL"/>
<dbReference type="PDBsum" id="1MQM"/>
<dbReference type="PDBsum" id="1MQN"/>
<dbReference type="BMRB" id="P03442"/>
<dbReference type="SMR" id="P03442"/>
<dbReference type="UniLectin" id="P03442"/>
<dbReference type="GlyCosmos" id="P03442">
    <property type="glycosylation" value="7 sites, No reported glycans"/>
</dbReference>
<dbReference type="EvolutionaryTrace" id="P03442"/>
<dbReference type="GO" id="GO:0020002">
    <property type="term" value="C:host cell plasma membrane"/>
    <property type="evidence" value="ECO:0007669"/>
    <property type="project" value="UniProtKB-SubCell"/>
</dbReference>
<dbReference type="GO" id="GO:0016020">
    <property type="term" value="C:membrane"/>
    <property type="evidence" value="ECO:0007669"/>
    <property type="project" value="UniProtKB-UniRule"/>
</dbReference>
<dbReference type="GO" id="GO:0019031">
    <property type="term" value="C:viral envelope"/>
    <property type="evidence" value="ECO:0007669"/>
    <property type="project" value="UniProtKB-UniRule"/>
</dbReference>
<dbReference type="GO" id="GO:0055036">
    <property type="term" value="C:virion membrane"/>
    <property type="evidence" value="ECO:0007669"/>
    <property type="project" value="UniProtKB-SubCell"/>
</dbReference>
<dbReference type="GO" id="GO:0046789">
    <property type="term" value="F:host cell surface receptor binding"/>
    <property type="evidence" value="ECO:0007669"/>
    <property type="project" value="UniProtKB-UniRule"/>
</dbReference>
<dbReference type="GO" id="GO:0075512">
    <property type="term" value="P:clathrin-dependent endocytosis of virus by host cell"/>
    <property type="evidence" value="ECO:0007669"/>
    <property type="project" value="UniProtKB-UniRule"/>
</dbReference>
<dbReference type="GO" id="GO:0039654">
    <property type="term" value="P:fusion of virus membrane with host endosome membrane"/>
    <property type="evidence" value="ECO:0007669"/>
    <property type="project" value="UniProtKB-UniRule"/>
</dbReference>
<dbReference type="GO" id="GO:0019064">
    <property type="term" value="P:fusion of virus membrane with host plasma membrane"/>
    <property type="evidence" value="ECO:0007669"/>
    <property type="project" value="InterPro"/>
</dbReference>
<dbReference type="GO" id="GO:0046761">
    <property type="term" value="P:viral budding from plasma membrane"/>
    <property type="evidence" value="ECO:0007669"/>
    <property type="project" value="UniProtKB-UniRule"/>
</dbReference>
<dbReference type="GO" id="GO:0019062">
    <property type="term" value="P:virion attachment to host cell"/>
    <property type="evidence" value="ECO:0007669"/>
    <property type="project" value="UniProtKB-KW"/>
</dbReference>
<dbReference type="FunFam" id="3.90.20.10:FF:000001">
    <property type="entry name" value="Hemagglutinin"/>
    <property type="match status" value="1"/>
</dbReference>
<dbReference type="FunFam" id="3.90.209.20:FF:000001">
    <property type="entry name" value="Hemagglutinin"/>
    <property type="match status" value="1"/>
</dbReference>
<dbReference type="Gene3D" id="3.90.20.10">
    <property type="match status" value="1"/>
</dbReference>
<dbReference type="Gene3D" id="3.90.209.20">
    <property type="match status" value="1"/>
</dbReference>
<dbReference type="HAMAP" id="MF_04072">
    <property type="entry name" value="INFV_HEMA"/>
    <property type="match status" value="1"/>
</dbReference>
<dbReference type="InterPro" id="IPR008980">
    <property type="entry name" value="Capsid_hemagglutn"/>
</dbReference>
<dbReference type="InterPro" id="IPR013828">
    <property type="entry name" value="Hemagglutn_HA1_a/b_dom_sf"/>
</dbReference>
<dbReference type="InterPro" id="IPR000149">
    <property type="entry name" value="Hemagglutn_influenz_A"/>
</dbReference>
<dbReference type="InterPro" id="IPR001364">
    <property type="entry name" value="Hemagglutn_influenz_A/B"/>
</dbReference>
<dbReference type="Pfam" id="PF00509">
    <property type="entry name" value="Hemagglutinin"/>
    <property type="match status" value="1"/>
</dbReference>
<dbReference type="PRINTS" id="PR00330">
    <property type="entry name" value="HEMAGGLUTN1"/>
</dbReference>
<dbReference type="PRINTS" id="PR00329">
    <property type="entry name" value="HEMAGGLUTN12"/>
</dbReference>
<dbReference type="SUPFAM" id="SSF58064">
    <property type="entry name" value="Influenza hemagglutinin (stalk)"/>
    <property type="match status" value="1"/>
</dbReference>
<dbReference type="SUPFAM" id="SSF49818">
    <property type="entry name" value="Viral protein domain"/>
    <property type="match status" value="1"/>
</dbReference>
<organism>
    <name type="scientific">Influenza A virus (strain A/Duck/Ukraine/1/1963 H3N8)</name>
    <dbReference type="NCBI Taxonomy" id="385580"/>
    <lineage>
        <taxon>Viruses</taxon>
        <taxon>Riboviria</taxon>
        <taxon>Orthornavirae</taxon>
        <taxon>Negarnaviricota</taxon>
        <taxon>Polyploviricotina</taxon>
        <taxon>Insthoviricetes</taxon>
        <taxon>Articulavirales</taxon>
        <taxon>Orthomyxoviridae</taxon>
        <taxon>Alphainfluenzavirus</taxon>
        <taxon>Alphainfluenzavirus influenzae</taxon>
        <taxon>Influenza A virus</taxon>
    </lineage>
</organism>
<comment type="function">
    <text>Binds to sialic acid-containing receptors on the cell surface, bringing about the attachment of the virus particle to the cell. This attachment induces virion internalization of about two third of the virus particles through clathrin-dependent endocytosis and about one third through a clathrin- and caveolin-independent pathway. Plays a major role in the determination of host range restriction and virulence. Class I viral fusion protein. Responsible for penetration of the virus into the cell cytoplasm by mediating the fusion of the membrane of the endocytosed virus particle with the endosomal membrane. Low pH in endosomes induces an irreversible conformational change in HA2, releasing the fusion hydrophobic peptide. Several trimers are required to form a competent fusion pore.</text>
</comment>
<comment type="function">
    <text evidence="1">Binds to sialic acid-containing receptors on the cell surface, bringing about the attachment of the virus particle to the cell. This attachment induces virion internalization either through clathrin-dependent endocytosis or through clathrin- and caveolin-independent pathway. Plays a major role in the determination of host range restriction and virulence. Class I viral fusion protein. Responsible for penetration of the virus into the cell cytoplasm by mediating the fusion of the membrane of the endocytosed virus particle with the endosomal membrane. Low pH in endosomes induces an irreversible conformational change in HA2, releasing the fusion hydrophobic peptide. Several trimers are required to form a competent fusion pore.</text>
</comment>
<comment type="subunit">
    <text evidence="1">Homotrimer of disulfide-linked HA1-HA2.</text>
</comment>
<comment type="subcellular location">
    <subcellularLocation>
        <location evidence="1">Virion membrane</location>
        <topology evidence="1">Single-pass type I membrane protein</topology>
    </subcellularLocation>
    <subcellularLocation>
        <location evidence="1">Host apical cell membrane</location>
        <topology evidence="1">Single-pass type I membrane protein</topology>
    </subcellularLocation>
    <text evidence="1">Targeted to the apical plasma membrane in epithelial polarized cells through a signal present in the transmembrane domain. Associated with glycosphingolipid- and cholesterol-enriched detergent-resistant lipid rafts.</text>
</comment>
<comment type="PTM">
    <text evidence="1">Palmitoylated.</text>
</comment>
<comment type="PTM">
    <text evidence="1">In natural infection, inactive HA is matured into HA1 and HA2 outside the cell by one or more trypsin-like, arginine-specific endoprotease secreted by the bronchial epithelial cells. One identified protease that may be involved in this process is secreted in lungs by club cells.</text>
</comment>
<comment type="miscellaneous">
    <text>Major glycoprotein, comprises over 80% of the envelope proteins present in virus particle.</text>
</comment>
<comment type="miscellaneous">
    <text>The extent of infection into host organism is determined by HA. Influenza viruses bud from the apical surface of polarized epithelial cells (e.g. bronchial epithelial cells) into lumen of lungs and are therefore usually pneumotropic. The reason is that HA is cleaved by tryptase clara which is restricted to lungs. However, HAs of H5 and H7 pantropic avian viruses subtypes can be cleaved by furin and subtilisin-type enzymes, allowing the virus to grow in other organs than lungs.</text>
</comment>
<comment type="miscellaneous">
    <text evidence="2">The influenza A genome consist of 8 RNA segments. Genetic variation of hemagglutinin and/or neuraminidase genes results in the emergence of new influenza strains. The mechanism of variation can be the result of point mutations or the result of genetic reassortment between segments of two different strains.</text>
</comment>
<comment type="similarity">
    <text evidence="1">Belongs to the influenza viruses hemagglutinin family.</text>
</comment>
<accession>P03442</accession>
<organismHost>
    <name type="scientific">Aves</name>
    <dbReference type="NCBI Taxonomy" id="8782"/>
</organismHost>
<organismHost>
    <name type="scientific">Equus caballus</name>
    <name type="common">Horse</name>
    <dbReference type="NCBI Taxonomy" id="9796"/>
</organismHost>
<gene>
    <name evidence="1" type="primary">HA</name>
</gene>
<sequence length="566" mass="63530">MKTVIALSYILCLTFGQDLPGNDNSTATLCLGHHAVPNGTIVKTITDDQIEVTNATELVQSSSTGKICNNPHRILDGRACTLIDALLGDPHCDVFQNETWDLFVERSNAFSNCYPYDIPDYASLRSLVASSGTLEFITEGFTWTGVTQNGGSSACKRGPANGFFSRLNWLTKSESAYPVLNVTMPNNDNFDKLYIWGVHHPSTNQEQTNLYVQASGRVTVSTRRSQQTIIPNIGSRPWVRGQPGRISIYWTIVKPGDVLVINSNGNLIAPRGYFKMRTGKSSIMRSDAPIDTCISECITPNGSIPNDKPFQNVNKITYGACPKYVKQNTLKLATGMRNVPEKQTRGLFGAIAGFIENGWEGMIDGWYGFRHQNSEGTGQAADLKSTQAAIDQINRKLNRVIEKTNEKFHQIEKEFSEVEGRIQDLEKYVEDTKIDLWSYNAELLVALENQHTIDLADSEMNKLFEKTRRQLRENAEDMGNGCFKIYHKCDNACIESIRNGTYDHDIYRDEALNNRFQIKGVELKSGYKDWILWISFAISCLLLCVVLLGFIMWACQRGNIRCNICI</sequence>
<protein>
    <recommendedName>
        <fullName evidence="1">Hemagglutinin</fullName>
    </recommendedName>
    <component>
        <recommendedName>
            <fullName evidence="1">Hemagglutinin HA1 chain</fullName>
        </recommendedName>
    </component>
    <component>
        <recommendedName>
            <fullName evidence="1">Hemagglutinin HA2 chain</fullName>
        </recommendedName>
    </component>
</protein>
<feature type="signal peptide" evidence="1">
    <location>
        <begin position="1"/>
        <end position="16"/>
    </location>
</feature>
<feature type="chain" id="PRO_0000440401" description="Hemagglutinin" evidence="1">
    <location>
        <begin position="17"/>
        <end position="566"/>
    </location>
</feature>
<feature type="chain" id="PRO_0000038946" description="Hemagglutinin HA1 chain">
    <location>
        <begin position="17"/>
        <end position="344"/>
    </location>
</feature>
<feature type="chain" id="PRO_0000038947" description="Hemagglutinin HA2 chain" evidence="1">
    <location>
        <begin position="346"/>
        <end position="566"/>
    </location>
</feature>
<feature type="topological domain" description="Extracellular" evidence="1">
    <location>
        <begin position="17"/>
        <end position="530"/>
    </location>
</feature>
<feature type="transmembrane region" description="Helical" evidence="1">
    <location>
        <begin position="531"/>
        <end position="551"/>
    </location>
</feature>
<feature type="topological domain" description="Cytoplasmic" evidence="1">
    <location>
        <begin position="552"/>
        <end position="566"/>
    </location>
</feature>
<feature type="site" description="Cleavage; by host" evidence="1">
    <location>
        <begin position="345"/>
        <end position="346"/>
    </location>
</feature>
<feature type="lipid moiety-binding region" description="S-palmitoyl cysteine; by host" evidence="1">
    <location>
        <position position="555"/>
    </location>
</feature>
<feature type="lipid moiety-binding region" description="S-palmitoyl cysteine; by host" evidence="1">
    <location>
        <position position="562"/>
    </location>
</feature>
<feature type="lipid moiety-binding region" description="S-palmitoyl cysteine; by host" evidence="1">
    <location>
        <position position="565"/>
    </location>
</feature>
<feature type="glycosylation site" description="N-linked (GlcNAc...) asparagine; by host" evidence="1">
    <location>
        <position position="24"/>
    </location>
</feature>
<feature type="glycosylation site" description="N-linked (GlcNAc...) asparagine; by host" evidence="1">
    <location>
        <position position="38"/>
    </location>
</feature>
<feature type="glycosylation site" description="N-linked (GlcNAc...) asparagine; by host" evidence="1">
    <location>
        <position position="54"/>
    </location>
</feature>
<feature type="glycosylation site" description="N-linked (GlcNAc...) asparagine; by host" evidence="1">
    <location>
        <position position="97"/>
    </location>
</feature>
<feature type="glycosylation site" description="N-linked (GlcNAc...) asparagine; by host" evidence="1">
    <location>
        <position position="181"/>
    </location>
</feature>
<feature type="glycosylation site" description="N-linked (GlcNAc...) asparagine; by host" evidence="1">
    <location>
        <position position="301"/>
    </location>
</feature>
<feature type="glycosylation site" description="N-linked (GlcNAc...) asparagine; by host" evidence="1">
    <location>
        <position position="499"/>
    </location>
</feature>
<feature type="disulfide bond" description="Interchain (between HA1 and HA2 chains)" evidence="1">
    <location>
        <begin position="30"/>
        <end position="482"/>
    </location>
</feature>
<feature type="disulfide bond" evidence="1">
    <location>
        <begin position="68"/>
        <end position="293"/>
    </location>
</feature>
<feature type="disulfide bond" evidence="1">
    <location>
        <begin position="80"/>
        <end position="92"/>
    </location>
</feature>
<feature type="disulfide bond" evidence="1">
    <location>
        <begin position="113"/>
        <end position="155"/>
    </location>
</feature>
<feature type="disulfide bond" evidence="1">
    <location>
        <begin position="297"/>
        <end position="321"/>
    </location>
</feature>
<feature type="disulfide bond" evidence="1">
    <location>
        <begin position="489"/>
        <end position="493"/>
    </location>
</feature>
<feature type="strand" evidence="4">
    <location>
        <begin position="27"/>
        <end position="34"/>
    </location>
</feature>
<feature type="strand" evidence="4">
    <location>
        <begin position="40"/>
        <end position="42"/>
    </location>
</feature>
<feature type="strand" evidence="4">
    <location>
        <begin position="48"/>
        <end position="53"/>
    </location>
</feature>
<feature type="strand" evidence="4">
    <location>
        <begin position="55"/>
        <end position="57"/>
    </location>
</feature>
<feature type="turn" evidence="4">
    <location>
        <begin position="71"/>
        <end position="73"/>
    </location>
</feature>
<feature type="strand" evidence="4">
    <location>
        <begin position="74"/>
        <end position="76"/>
    </location>
</feature>
<feature type="helix" evidence="4">
    <location>
        <begin position="82"/>
        <end position="87"/>
    </location>
</feature>
<feature type="helix" evidence="4">
    <location>
        <begin position="90"/>
        <end position="95"/>
    </location>
</feature>
<feature type="strand" evidence="4">
    <location>
        <begin position="101"/>
        <end position="105"/>
    </location>
</feature>
<feature type="helix" evidence="4">
    <location>
        <begin position="121"/>
        <end position="131"/>
    </location>
</feature>
<feature type="strand" evidence="4">
    <location>
        <begin position="136"/>
        <end position="138"/>
    </location>
</feature>
<feature type="strand" evidence="4">
    <location>
        <begin position="152"/>
        <end position="157"/>
    </location>
</feature>
<feature type="strand" evidence="4">
    <location>
        <begin position="160"/>
        <end position="162"/>
    </location>
</feature>
<feature type="strand" evidence="4">
    <location>
        <begin position="167"/>
        <end position="169"/>
    </location>
</feature>
<feature type="strand" evidence="4">
    <location>
        <begin position="171"/>
        <end position="175"/>
    </location>
</feature>
<feature type="strand" evidence="4">
    <location>
        <begin position="180"/>
        <end position="185"/>
    </location>
</feature>
<feature type="strand" evidence="4">
    <location>
        <begin position="188"/>
        <end position="190"/>
    </location>
</feature>
<feature type="strand" evidence="4">
    <location>
        <begin position="192"/>
        <end position="200"/>
    </location>
</feature>
<feature type="helix" evidence="4">
    <location>
        <begin position="204"/>
        <end position="211"/>
    </location>
</feature>
<feature type="strand" evidence="4">
    <location>
        <begin position="212"/>
        <end position="215"/>
    </location>
</feature>
<feature type="strand" evidence="4">
    <location>
        <begin position="218"/>
        <end position="221"/>
    </location>
</feature>
<feature type="strand" evidence="4">
    <location>
        <begin position="226"/>
        <end position="229"/>
    </location>
</feature>
<feature type="strand" evidence="4">
    <location>
        <begin position="245"/>
        <end position="253"/>
    </location>
</feature>
<feature type="strand" evidence="4">
    <location>
        <begin position="258"/>
        <end position="265"/>
    </location>
</feature>
<feature type="strand" evidence="4">
    <location>
        <begin position="267"/>
        <end position="270"/>
    </location>
</feature>
<feature type="strand" evidence="4">
    <location>
        <begin position="272"/>
        <end position="275"/>
    </location>
</feature>
<feature type="strand" evidence="4">
    <location>
        <begin position="282"/>
        <end position="285"/>
    </location>
</feature>
<feature type="strand" evidence="4">
    <location>
        <begin position="292"/>
        <end position="294"/>
    </location>
</feature>
<feature type="strand" evidence="4">
    <location>
        <begin position="296"/>
        <end position="299"/>
    </location>
</feature>
<feature type="strand" evidence="4">
    <location>
        <begin position="302"/>
        <end position="304"/>
    </location>
</feature>
<feature type="strand" evidence="4">
    <location>
        <begin position="307"/>
        <end position="311"/>
    </location>
</feature>
<feature type="strand" evidence="4">
    <location>
        <begin position="318"/>
        <end position="320"/>
    </location>
</feature>
<feature type="strand" evidence="4">
    <location>
        <begin position="331"/>
        <end position="333"/>
    </location>
</feature>
<feature type="turn" evidence="4">
    <location>
        <begin position="352"/>
        <end position="354"/>
    </location>
</feature>
<feature type="turn" evidence="3">
    <location>
        <begin position="356"/>
        <end position="359"/>
    </location>
</feature>
<feature type="helix" evidence="3">
    <location>
        <begin position="360"/>
        <end position="363"/>
    </location>
</feature>
<feature type="strand" evidence="4">
    <location>
        <begin position="366"/>
        <end position="373"/>
    </location>
</feature>
<feature type="strand" evidence="4">
    <location>
        <begin position="376"/>
        <end position="381"/>
    </location>
</feature>
<feature type="helix" evidence="4">
    <location>
        <begin position="383"/>
        <end position="401"/>
    </location>
</feature>
<feature type="helix" evidence="4">
    <location>
        <begin position="421"/>
        <end position="471"/>
    </location>
</feature>
<feature type="strand" evidence="4">
    <location>
        <begin position="474"/>
        <end position="477"/>
    </location>
</feature>
<feature type="strand" evidence="4">
    <location>
        <begin position="479"/>
        <end position="487"/>
    </location>
</feature>
<feature type="helix" evidence="4">
    <location>
        <begin position="491"/>
        <end position="498"/>
    </location>
</feature>
<feature type="helix" evidence="4">
    <location>
        <begin position="505"/>
        <end position="515"/>
    </location>
</feature>
<reference key="1">
    <citation type="journal article" date="1981" name="Cell">
        <title>Complete structure of A/duck/Ukraine/63 influenza hemagglutinin gene: animal virus as progenitor of human H3 Hong Kong 1968 influenza hemagglutinin.</title>
        <authorList>
            <person name="Fang R."/>
            <person name="Min Jou W."/>
            <person name="Huylebroeck D."/>
            <person name="Devos R."/>
            <person name="Fiers W."/>
        </authorList>
    </citation>
    <scope>NUCLEOTIDE SEQUENCE</scope>
</reference>
<reference key="2">
    <citation type="journal article" date="2003" name="Virology">
        <title>X-ray structure of the hemagglutinin of a potential H3 avian progenitor of the 1968 Hong Kong pandemic influenza virus.</title>
        <authorList>
            <person name="Ha Y."/>
            <person name="Stevens D.J."/>
            <person name="Skehel J.J."/>
            <person name="Wiley D.C."/>
        </authorList>
    </citation>
    <scope>X-RAY CRYSTALLOGRAPHY (2.9 ANGSTROMS) OF 17-566</scope>
</reference>
<evidence type="ECO:0000255" key="1">
    <source>
        <dbReference type="HAMAP-Rule" id="MF_04072"/>
    </source>
</evidence>
<evidence type="ECO:0000305" key="2"/>
<evidence type="ECO:0007829" key="3">
    <source>
        <dbReference type="PDB" id="1IBN"/>
    </source>
</evidence>
<evidence type="ECO:0007829" key="4">
    <source>
        <dbReference type="PDB" id="1MQM"/>
    </source>
</evidence>
<name>HEMA_I63A3</name>
<keyword id="KW-0002">3D-structure</keyword>
<keyword id="KW-1167">Clathrin- and caveolin-independent endocytosis of virus by host</keyword>
<keyword id="KW-1165">Clathrin-mediated endocytosis of virus by host</keyword>
<keyword id="KW-1015">Disulfide bond</keyword>
<keyword id="KW-1170">Fusion of virus membrane with host endosomal membrane</keyword>
<keyword id="KW-1168">Fusion of virus membrane with host membrane</keyword>
<keyword id="KW-0325">Glycoprotein</keyword>
<keyword id="KW-0348">Hemagglutinin</keyword>
<keyword id="KW-1032">Host cell membrane</keyword>
<keyword id="KW-1043">Host membrane</keyword>
<keyword id="KW-0945">Host-virus interaction</keyword>
<keyword id="KW-0449">Lipoprotein</keyword>
<keyword id="KW-0472">Membrane</keyword>
<keyword id="KW-0564">Palmitate</keyword>
<keyword id="KW-0732">Signal</keyword>
<keyword id="KW-0812">Transmembrane</keyword>
<keyword id="KW-1133">Transmembrane helix</keyword>
<keyword id="KW-1161">Viral attachment to host cell</keyword>
<keyword id="KW-0261">Viral envelope protein</keyword>
<keyword id="KW-1162">Viral penetration into host cytoplasm</keyword>
<keyword id="KW-0946">Virion</keyword>
<keyword id="KW-1164">Virus endocytosis by host</keyword>
<keyword id="KW-1160">Virus entry into host cell</keyword>
<proteinExistence type="evidence at protein level"/>